<name>YVGM_BACSU</name>
<sequence>MALLPSSISASEFFTPVVLSFQVAAVAGIVVIILGTLAGAWMSRASFFGKTALETCFMLPLVLPPTVVGFILIVIFGKHSFIGQAIEWIFQQPVIFTWWAAVIASAVVAFPLMYQSAKTGFADIDPDIQGAAMVDGASRWKVFIHISVPLAYPSLLTGSILSLARALGEFGATLMFAGNIPGVTQTLPTAIYVALDSGNNTLAWAWVVCIVVISFLMLFFIQQKKTH</sequence>
<accession>O32209</accession>
<accession>C0SPA1</accession>
<accession>Q7B2L1</accession>
<organism>
    <name type="scientific">Bacillus subtilis (strain 168)</name>
    <dbReference type="NCBI Taxonomy" id="224308"/>
    <lineage>
        <taxon>Bacteria</taxon>
        <taxon>Bacillati</taxon>
        <taxon>Bacillota</taxon>
        <taxon>Bacilli</taxon>
        <taxon>Bacillales</taxon>
        <taxon>Bacillaceae</taxon>
        <taxon>Bacillus</taxon>
    </lineage>
</organism>
<gene>
    <name type="primary">yvgM</name>
    <name type="ordered locus">BSU33390</name>
</gene>
<protein>
    <recommendedName>
        <fullName>Putative molybdenum transport system permease protein YvgM</fullName>
    </recommendedName>
</protein>
<proteinExistence type="inferred from homology"/>
<evidence type="ECO:0000250" key="1"/>
<evidence type="ECO:0000255" key="2">
    <source>
        <dbReference type="PROSITE-ProRule" id="PRU00441"/>
    </source>
</evidence>
<evidence type="ECO:0000305" key="3"/>
<keyword id="KW-1003">Cell membrane</keyword>
<keyword id="KW-0472">Membrane</keyword>
<keyword id="KW-0500">Molybdenum</keyword>
<keyword id="KW-1185">Reference proteome</keyword>
<keyword id="KW-0812">Transmembrane</keyword>
<keyword id="KW-1133">Transmembrane helix</keyword>
<keyword id="KW-0813">Transport</keyword>
<feature type="chain" id="PRO_0000378463" description="Putative molybdenum transport system permease protein YvgM">
    <location>
        <begin position="1"/>
        <end position="227"/>
    </location>
</feature>
<feature type="transmembrane region" description="Helical" evidence="2">
    <location>
        <begin position="17"/>
        <end position="37"/>
    </location>
</feature>
<feature type="transmembrane region" description="Helical" evidence="2">
    <location>
        <begin position="57"/>
        <end position="77"/>
    </location>
</feature>
<feature type="transmembrane region" description="Helical" evidence="2">
    <location>
        <begin position="94"/>
        <end position="114"/>
    </location>
</feature>
<feature type="transmembrane region" description="Helical" evidence="2">
    <location>
        <begin position="142"/>
        <end position="162"/>
    </location>
</feature>
<feature type="transmembrane region" description="Helical" evidence="2">
    <location>
        <begin position="201"/>
        <end position="221"/>
    </location>
</feature>
<feature type="domain" description="ABC transmembrane type-1" evidence="2">
    <location>
        <begin position="17"/>
        <end position="221"/>
    </location>
</feature>
<comment type="function">
    <text evidence="1">could be part of the binding-protein-dependent transport system for molybdenum; probably responsible for the translocation of the substrate across the membrane.</text>
</comment>
<comment type="subcellular location">
    <subcellularLocation>
        <location evidence="3">Cell membrane</location>
        <topology evidence="2">Multi-pass membrane protein</topology>
    </subcellularLocation>
</comment>
<comment type="similarity">
    <text evidence="3">Belongs to the binding-protein-dependent transport system permease family. CysTW subfamily.</text>
</comment>
<comment type="sequence caution" evidence="3">
    <conflict type="erroneous initiation">
        <sequence resource="EMBL-CDS" id="CAA11713"/>
    </conflict>
</comment>
<dbReference type="EMBL" id="AJ223978">
    <property type="protein sequence ID" value="CAA11713.1"/>
    <property type="status" value="ALT_INIT"/>
    <property type="molecule type" value="Genomic_DNA"/>
</dbReference>
<dbReference type="EMBL" id="AL009126">
    <property type="protein sequence ID" value="CAB15344.2"/>
    <property type="molecule type" value="Genomic_DNA"/>
</dbReference>
<dbReference type="PIR" id="B70040">
    <property type="entry name" value="B70040"/>
</dbReference>
<dbReference type="RefSeq" id="NP_391219.2">
    <property type="nucleotide sequence ID" value="NC_000964.3"/>
</dbReference>
<dbReference type="SMR" id="O32209"/>
<dbReference type="FunCoup" id="O32209">
    <property type="interactions" value="376"/>
</dbReference>
<dbReference type="STRING" id="224308.BSU33390"/>
<dbReference type="PaxDb" id="224308-BSU33390"/>
<dbReference type="EnsemblBacteria" id="CAB15344">
    <property type="protein sequence ID" value="CAB15344"/>
    <property type="gene ID" value="BSU_33390"/>
</dbReference>
<dbReference type="GeneID" id="936009"/>
<dbReference type="KEGG" id="bsu:BSU33390"/>
<dbReference type="PATRIC" id="fig|224308.179.peg.3624"/>
<dbReference type="eggNOG" id="COG4149">
    <property type="taxonomic scope" value="Bacteria"/>
</dbReference>
<dbReference type="InParanoid" id="O32209"/>
<dbReference type="OrthoDB" id="9795403at2"/>
<dbReference type="PhylomeDB" id="O32209"/>
<dbReference type="BioCyc" id="BSUB:BSU33390-MONOMER"/>
<dbReference type="Proteomes" id="UP000001570">
    <property type="component" value="Chromosome"/>
</dbReference>
<dbReference type="GO" id="GO:0005886">
    <property type="term" value="C:plasma membrane"/>
    <property type="evidence" value="ECO:0000318"/>
    <property type="project" value="GO_Central"/>
</dbReference>
<dbReference type="GO" id="GO:0015098">
    <property type="term" value="F:molybdate ion transmembrane transporter activity"/>
    <property type="evidence" value="ECO:0007669"/>
    <property type="project" value="InterPro"/>
</dbReference>
<dbReference type="CDD" id="cd06261">
    <property type="entry name" value="TM_PBP2"/>
    <property type="match status" value="1"/>
</dbReference>
<dbReference type="FunFam" id="1.10.3720.10:FF:000050">
    <property type="entry name" value="Molybdenum transport system permease"/>
    <property type="match status" value="1"/>
</dbReference>
<dbReference type="Gene3D" id="1.10.3720.10">
    <property type="entry name" value="MetI-like"/>
    <property type="match status" value="1"/>
</dbReference>
<dbReference type="InterPro" id="IPR000515">
    <property type="entry name" value="MetI-like"/>
</dbReference>
<dbReference type="InterPro" id="IPR035906">
    <property type="entry name" value="MetI-like_sf"/>
</dbReference>
<dbReference type="InterPro" id="IPR011867">
    <property type="entry name" value="ModB_ABC"/>
</dbReference>
<dbReference type="NCBIfam" id="TIGR02141">
    <property type="entry name" value="modB_ABC"/>
    <property type="match status" value="1"/>
</dbReference>
<dbReference type="PANTHER" id="PTHR30183">
    <property type="entry name" value="MOLYBDENUM TRANSPORT SYSTEM PERMEASE PROTEIN MODB"/>
    <property type="match status" value="1"/>
</dbReference>
<dbReference type="PANTHER" id="PTHR30183:SF3">
    <property type="entry name" value="MOLYBDENUM TRANSPORT SYSTEM PERMEASE PROTEIN MODB"/>
    <property type="match status" value="1"/>
</dbReference>
<dbReference type="Pfam" id="PF00528">
    <property type="entry name" value="BPD_transp_1"/>
    <property type="match status" value="1"/>
</dbReference>
<dbReference type="SUPFAM" id="SSF161098">
    <property type="entry name" value="MetI-like"/>
    <property type="match status" value="1"/>
</dbReference>
<dbReference type="PROSITE" id="PS50928">
    <property type="entry name" value="ABC_TM1"/>
    <property type="match status" value="1"/>
</dbReference>
<reference key="1">
    <citation type="journal article" date="1998" name="Microbiology">
        <title>The yvsA-yvqA (293 degrees - 289 degrees) region of the Bacillus subtilis chromosome containing genes involved in metal ion uptake and a putative sigma factor.</title>
        <authorList>
            <person name="Wipat A."/>
            <person name="Brignell C.S."/>
            <person name="Guy J.B."/>
            <person name="Rose M."/>
            <person name="Emmerson P.T."/>
            <person name="Harwood C.R."/>
        </authorList>
    </citation>
    <scope>NUCLEOTIDE SEQUENCE [GENOMIC DNA]</scope>
    <source>
        <strain>168</strain>
    </source>
</reference>
<reference key="2">
    <citation type="journal article" date="1997" name="Nature">
        <title>The complete genome sequence of the Gram-positive bacterium Bacillus subtilis.</title>
        <authorList>
            <person name="Kunst F."/>
            <person name="Ogasawara N."/>
            <person name="Moszer I."/>
            <person name="Albertini A.M."/>
            <person name="Alloni G."/>
            <person name="Azevedo V."/>
            <person name="Bertero M.G."/>
            <person name="Bessieres P."/>
            <person name="Bolotin A."/>
            <person name="Borchert S."/>
            <person name="Borriss R."/>
            <person name="Boursier L."/>
            <person name="Brans A."/>
            <person name="Braun M."/>
            <person name="Brignell S.C."/>
            <person name="Bron S."/>
            <person name="Brouillet S."/>
            <person name="Bruschi C.V."/>
            <person name="Caldwell B."/>
            <person name="Capuano V."/>
            <person name="Carter N.M."/>
            <person name="Choi S.-K."/>
            <person name="Codani J.-J."/>
            <person name="Connerton I.F."/>
            <person name="Cummings N.J."/>
            <person name="Daniel R.A."/>
            <person name="Denizot F."/>
            <person name="Devine K.M."/>
            <person name="Duesterhoeft A."/>
            <person name="Ehrlich S.D."/>
            <person name="Emmerson P.T."/>
            <person name="Entian K.-D."/>
            <person name="Errington J."/>
            <person name="Fabret C."/>
            <person name="Ferrari E."/>
            <person name="Foulger D."/>
            <person name="Fritz C."/>
            <person name="Fujita M."/>
            <person name="Fujita Y."/>
            <person name="Fuma S."/>
            <person name="Galizzi A."/>
            <person name="Galleron N."/>
            <person name="Ghim S.-Y."/>
            <person name="Glaser P."/>
            <person name="Goffeau A."/>
            <person name="Golightly E.J."/>
            <person name="Grandi G."/>
            <person name="Guiseppi G."/>
            <person name="Guy B.J."/>
            <person name="Haga K."/>
            <person name="Haiech J."/>
            <person name="Harwood C.R."/>
            <person name="Henaut A."/>
            <person name="Hilbert H."/>
            <person name="Holsappel S."/>
            <person name="Hosono S."/>
            <person name="Hullo M.-F."/>
            <person name="Itaya M."/>
            <person name="Jones L.-M."/>
            <person name="Joris B."/>
            <person name="Karamata D."/>
            <person name="Kasahara Y."/>
            <person name="Klaerr-Blanchard M."/>
            <person name="Klein C."/>
            <person name="Kobayashi Y."/>
            <person name="Koetter P."/>
            <person name="Koningstein G."/>
            <person name="Krogh S."/>
            <person name="Kumano M."/>
            <person name="Kurita K."/>
            <person name="Lapidus A."/>
            <person name="Lardinois S."/>
            <person name="Lauber J."/>
            <person name="Lazarevic V."/>
            <person name="Lee S.-M."/>
            <person name="Levine A."/>
            <person name="Liu H."/>
            <person name="Masuda S."/>
            <person name="Mauel C."/>
            <person name="Medigue C."/>
            <person name="Medina N."/>
            <person name="Mellado R.P."/>
            <person name="Mizuno M."/>
            <person name="Moestl D."/>
            <person name="Nakai S."/>
            <person name="Noback M."/>
            <person name="Noone D."/>
            <person name="O'Reilly M."/>
            <person name="Ogawa K."/>
            <person name="Ogiwara A."/>
            <person name="Oudega B."/>
            <person name="Park S.-H."/>
            <person name="Parro V."/>
            <person name="Pohl T.M."/>
            <person name="Portetelle D."/>
            <person name="Porwollik S."/>
            <person name="Prescott A.M."/>
            <person name="Presecan E."/>
            <person name="Pujic P."/>
            <person name="Purnelle B."/>
            <person name="Rapoport G."/>
            <person name="Rey M."/>
            <person name="Reynolds S."/>
            <person name="Rieger M."/>
            <person name="Rivolta C."/>
            <person name="Rocha E."/>
            <person name="Roche B."/>
            <person name="Rose M."/>
            <person name="Sadaie Y."/>
            <person name="Sato T."/>
            <person name="Scanlan E."/>
            <person name="Schleich S."/>
            <person name="Schroeter R."/>
            <person name="Scoffone F."/>
            <person name="Sekiguchi J."/>
            <person name="Sekowska A."/>
            <person name="Seror S.J."/>
            <person name="Serror P."/>
            <person name="Shin B.-S."/>
            <person name="Soldo B."/>
            <person name="Sorokin A."/>
            <person name="Tacconi E."/>
            <person name="Takagi T."/>
            <person name="Takahashi H."/>
            <person name="Takemaru K."/>
            <person name="Takeuchi M."/>
            <person name="Tamakoshi A."/>
            <person name="Tanaka T."/>
            <person name="Terpstra P."/>
            <person name="Tognoni A."/>
            <person name="Tosato V."/>
            <person name="Uchiyama S."/>
            <person name="Vandenbol M."/>
            <person name="Vannier F."/>
            <person name="Vassarotti A."/>
            <person name="Viari A."/>
            <person name="Wambutt R."/>
            <person name="Wedler E."/>
            <person name="Wedler H."/>
            <person name="Weitzenegger T."/>
            <person name="Winters P."/>
            <person name="Wipat A."/>
            <person name="Yamamoto H."/>
            <person name="Yamane K."/>
            <person name="Yasumoto K."/>
            <person name="Yata K."/>
            <person name="Yoshida K."/>
            <person name="Yoshikawa H.-F."/>
            <person name="Zumstein E."/>
            <person name="Yoshikawa H."/>
            <person name="Danchin A."/>
        </authorList>
    </citation>
    <scope>NUCLEOTIDE SEQUENCE [LARGE SCALE GENOMIC DNA]</scope>
    <source>
        <strain>168</strain>
    </source>
</reference>